<evidence type="ECO:0000255" key="1"/>
<evidence type="ECO:0000256" key="2">
    <source>
        <dbReference type="SAM" id="MobiDB-lite"/>
    </source>
</evidence>
<evidence type="ECO:0000305" key="3"/>
<comment type="similarity">
    <text evidence="3">To R.prowazekii RP296.</text>
</comment>
<keyword id="KW-1185">Reference proteome</keyword>
<keyword id="KW-0732">Signal</keyword>
<proteinExistence type="inferred from homology"/>
<sequence length="298" mass="34972">MFRKFLFIQLLIVTSLVKAEIIEVDSLNKITQDFKVNYNKNYLPQDLLVVTVLDKFLFKSFGVPIGEYIDQHRYLALAPLFSHINKNPKIIYITQLILTNNSYKKELQESDFPNFVNEMSNSQIPIIAVNNGFTGNFNNIPKFEIWFADYLKKNFYIDFSKSFPNNNYIIFNNLDSFDNTYPVFYKGILTSNNIPASKVILNFLIQINFIPKCFILISSSRELLRSMEFQLNNYSSNILFIGYHYNNKSISDDKDYKDIAYYTKMINDLIPQINKLKRNNPPLKNNNAKSKNSYETYK</sequence>
<organism>
    <name type="scientific">Rickettsia prowazekii (strain Madrid E)</name>
    <dbReference type="NCBI Taxonomy" id="272947"/>
    <lineage>
        <taxon>Bacteria</taxon>
        <taxon>Pseudomonadati</taxon>
        <taxon>Pseudomonadota</taxon>
        <taxon>Alphaproteobacteria</taxon>
        <taxon>Rickettsiales</taxon>
        <taxon>Rickettsiaceae</taxon>
        <taxon>Rickettsieae</taxon>
        <taxon>Rickettsia</taxon>
        <taxon>typhus group</taxon>
    </lineage>
</organism>
<dbReference type="EMBL" id="AJ235271">
    <property type="protein sequence ID" value="CAA14756.1"/>
    <property type="molecule type" value="Genomic_DNA"/>
</dbReference>
<dbReference type="PIR" id="B71685">
    <property type="entry name" value="B71685"/>
</dbReference>
<dbReference type="RefSeq" id="NP_220679.1">
    <property type="nucleotide sequence ID" value="NC_000963.1"/>
</dbReference>
<dbReference type="RefSeq" id="WP_004597375.1">
    <property type="nucleotide sequence ID" value="NC_000963.1"/>
</dbReference>
<dbReference type="STRING" id="272947.gene:17555376"/>
<dbReference type="EnsemblBacteria" id="CAA14756">
    <property type="protein sequence ID" value="CAA14756"/>
    <property type="gene ID" value="CAA14756"/>
</dbReference>
<dbReference type="KEGG" id="rpr:RP295"/>
<dbReference type="PATRIC" id="fig|272947.5.peg.304"/>
<dbReference type="HOGENOM" id="CLU_946219_0_0_5"/>
<dbReference type="OrthoDB" id="7161142at2"/>
<dbReference type="Proteomes" id="UP000002480">
    <property type="component" value="Chromosome"/>
</dbReference>
<dbReference type="InterPro" id="IPR022565">
    <property type="entry name" value="DUF2608"/>
</dbReference>
<dbReference type="Pfam" id="PF11019">
    <property type="entry name" value="DUF2608"/>
    <property type="match status" value="1"/>
</dbReference>
<accession>Q9ZDN2</accession>
<protein>
    <recommendedName>
        <fullName>Uncharacterized protein RP295</fullName>
    </recommendedName>
</protein>
<gene>
    <name type="ordered locus">RP295</name>
</gene>
<feature type="signal peptide" evidence="1">
    <location>
        <begin position="1"/>
        <end position="19"/>
    </location>
</feature>
<feature type="chain" id="PRO_0000268849" description="Uncharacterized protein RP295">
    <location>
        <begin position="20"/>
        <end position="298"/>
    </location>
</feature>
<feature type="region of interest" description="Disordered" evidence="2">
    <location>
        <begin position="278"/>
        <end position="298"/>
    </location>
</feature>
<feature type="compositionally biased region" description="Low complexity" evidence="2">
    <location>
        <begin position="279"/>
        <end position="298"/>
    </location>
</feature>
<reference key="1">
    <citation type="journal article" date="1998" name="Nature">
        <title>The genome sequence of Rickettsia prowazekii and the origin of mitochondria.</title>
        <authorList>
            <person name="Andersson S.G.E."/>
            <person name="Zomorodipour A."/>
            <person name="Andersson J.O."/>
            <person name="Sicheritz-Ponten T."/>
            <person name="Alsmark U.C.M."/>
            <person name="Podowski R.M."/>
            <person name="Naeslund A.K."/>
            <person name="Eriksson A.-S."/>
            <person name="Winkler H.H."/>
            <person name="Kurland C.G."/>
        </authorList>
    </citation>
    <scope>NUCLEOTIDE SEQUENCE [LARGE SCALE GENOMIC DNA]</scope>
    <source>
        <strain>Madrid E</strain>
    </source>
</reference>
<name>Y295_RICPR</name>